<keyword id="KW-0998">Cell outer membrane</keyword>
<keyword id="KW-0449">Lipoprotein</keyword>
<keyword id="KW-0472">Membrane</keyword>
<keyword id="KW-0564">Palmitate</keyword>
<keyword id="KW-0614">Plasmid</keyword>
<keyword id="KW-0732">Signal</keyword>
<gene>
    <name evidence="2" type="primary">ospA</name>
    <name evidence="6" type="ordered locus">BafPKo_A0015</name>
</gene>
<evidence type="ECO:0000255" key="1">
    <source>
        <dbReference type="PROSITE-ProRule" id="PRU00303"/>
    </source>
</evidence>
<evidence type="ECO:0000303" key="2">
    <source>
    </source>
</evidence>
<evidence type="ECO:0000305" key="3"/>
<evidence type="ECO:0000305" key="4">
    <source>
    </source>
</evidence>
<evidence type="ECO:0000312" key="5">
    <source>
        <dbReference type="EMBL" id="AAB23809.1"/>
    </source>
</evidence>
<evidence type="ECO:0000312" key="6">
    <source>
        <dbReference type="EMBL" id="AEL70634.1"/>
    </source>
</evidence>
<evidence type="ECO:0000312" key="7">
    <source>
        <dbReference type="EMBL" id="CAA44092.1"/>
    </source>
</evidence>
<evidence type="ECO:0000312" key="8">
    <source>
        <dbReference type="EMBL" id="CAA56469.1"/>
    </source>
</evidence>
<evidence type="ECO:0000312" key="9">
    <source>
        <dbReference type="EMBL" id="CAA56470.1"/>
    </source>
</evidence>
<name>OSPA_BORAP</name>
<organism>
    <name type="scientific">Borreliella afzelii (strain PKo)</name>
    <name type="common">Borrelia afzelii</name>
    <dbReference type="NCBI Taxonomy" id="390236"/>
    <lineage>
        <taxon>Bacteria</taxon>
        <taxon>Pseudomonadati</taxon>
        <taxon>Spirochaetota</taxon>
        <taxon>Spirochaetia</taxon>
        <taxon>Spirochaetales</taxon>
        <taxon>Borreliaceae</taxon>
        <taxon>Borreliella</taxon>
    </lineage>
</organism>
<sequence length="273" mass="29630">MKKYLLGIGLILALIACKQNVSSLDEKNSASVDLPGEMKVLVSKEKDKDGKYSLKATVDKIELKGTSDKDNGSGVLEGTKDDKSKAKLTIADDLSKTTFELFKEDGKTLVSRKVSSKDKTSTDEMFNEKGELSAKTMTRENGTKLEYTEMKSDGTGKAKEVLKNFTLEGKVANDKVTLEVKEGTVTLSKEIAKSGEVTVALNDTNTTQATKKTGAWDSKTSTLTISVNSKKTTQLVFTKQDTITVQKYDSAGTNLEGTAVEIKTLDELKNALK</sequence>
<accession>Q0SLZ0</accession>
<accession>P0A3N6</accession>
<accession>Q09088</accession>
<proteinExistence type="inferred from homology"/>
<geneLocation type="plasmid" evidence="6">
    <name>lp54</name>
</geneLocation>
<feature type="signal peptide" evidence="1">
    <location>
        <begin position="1"/>
        <end position="16"/>
    </location>
</feature>
<feature type="chain" id="PRO_0000456705" description="Outer surface protein A" evidence="1">
    <location>
        <begin position="17"/>
        <end position="273"/>
    </location>
</feature>
<feature type="lipid moiety-binding region" description="N-palmitoyl cysteine" evidence="1">
    <location>
        <position position="17"/>
    </location>
</feature>
<feature type="lipid moiety-binding region" description="S-diacylglycerol cysteine" evidence="1">
    <location>
        <position position="17"/>
    </location>
</feature>
<reference evidence="7" key="1">
    <citation type="journal article" date="1992" name="Mol. Microbiol.">
        <title>Molecular analysis and expression of a Borrelia burgdorferi gene encoding a 22 kDa protein (pC) in Escherichia coli.</title>
        <authorList>
            <person name="Fuchs R."/>
            <person name="Jauris S."/>
            <person name="Lottspeich F."/>
            <person name="Preac-Mursic V."/>
            <person name="Wilske B."/>
            <person name="Soutschek E."/>
        </authorList>
    </citation>
    <scope>NUCLEOTIDE SEQUENCE [GENOMIC DNA]</scope>
    <source>
        <strain>PKo</strain>
    </source>
</reference>
<reference evidence="5" key="2">
    <citation type="journal article" date="1993" name="J. Clin. Microbiol.">
        <title>An OspA serotyping system for Borrelia burgdorferi based on reactivity with monoclonal antibodies and OspA sequence analysis.</title>
        <authorList>
            <person name="Zumstein G."/>
            <person name="Fuchs R."/>
            <person name="Hofmann A."/>
            <person name="Preac-Mursic V."/>
            <person name="Soutschek E."/>
            <person name="Wilske B."/>
        </authorList>
    </citation>
    <scope>NUCLEOTIDE SEQUENCE [GENOMIC DNA]</scope>
    <source>
        <strain>PKo</strain>
    </source>
</reference>
<reference evidence="8 9" key="3">
    <citation type="journal article" date="1995" name="Med. Microbiol. Immunol.">
        <title>Sequence analysis of ospA genes shows homogeneity within Borrelia burgdorferi sensu stricto and Borrelia afzelii strains but reveals major subgroups within the Borrelia garinii species.</title>
        <authorList>
            <person name="Will G."/>
            <person name="Jauris-Heipke S."/>
            <person name="Schwab E."/>
            <person name="Busch U."/>
            <person name="Roessler D."/>
            <person name="Soutschek E."/>
            <person name="Wilske B."/>
            <person name="Preac-Mursic V."/>
        </authorList>
    </citation>
    <scope>NUCLEOTIDE SEQUENCE [GENOMIC DNA]</scope>
    <source>
        <strain>PWudl</strain>
        <strain>PWudl/6</strain>
    </source>
</reference>
<reference evidence="6" key="4">
    <citation type="journal article" date="2011" name="J. Bacteriol.">
        <title>Whole-genome sequences of two Borrelia afzelii and two Borrelia garinii Lyme disease agent isolates.</title>
        <authorList>
            <person name="Casjens S.R."/>
            <person name="Mongodin E.F."/>
            <person name="Qiu W.G."/>
            <person name="Dunn J.J."/>
            <person name="Luft B.J."/>
            <person name="Fraser-Liggett C.M."/>
            <person name="Schutzer S.E."/>
        </authorList>
    </citation>
    <scope>NUCLEOTIDE SEQUENCE [LARGE SCALE GENOMIC DNA]</scope>
    <source>
        <strain>PKo</strain>
        <plasmid evidence="6">lp54</plasmid>
    </source>
</reference>
<dbReference type="EMBL" id="S48322">
    <property type="protein sequence ID" value="AAB23809.1"/>
    <property type="molecule type" value="Genomic_DNA"/>
</dbReference>
<dbReference type="EMBL" id="X62161">
    <property type="protein sequence ID" value="CAA44092.1"/>
    <property type="molecule type" value="Genomic_DNA"/>
</dbReference>
<dbReference type="EMBL" id="X80184">
    <property type="protein sequence ID" value="CAA56469.1"/>
    <property type="molecule type" value="Genomic_DNA"/>
</dbReference>
<dbReference type="EMBL" id="X80185">
    <property type="protein sequence ID" value="CAA56470.1"/>
    <property type="molecule type" value="Genomic_DNA"/>
</dbReference>
<dbReference type="EMBL" id="CP002950">
    <property type="protein sequence ID" value="AEL70634.1"/>
    <property type="molecule type" value="Genomic_DNA"/>
</dbReference>
<dbReference type="RefSeq" id="WP_011703777.1">
    <property type="nucleotide sequence ID" value="NC_008564.1"/>
</dbReference>
<dbReference type="SMR" id="Q0SLZ0"/>
<dbReference type="KEGG" id="baf:BAPKO_2016"/>
<dbReference type="KEGG" id="bafz:BafPKo_A0015"/>
<dbReference type="PATRIC" id="fig|390236.22.peg.1428"/>
<dbReference type="HOGENOM" id="CLU_1014382_0_0_12"/>
<dbReference type="OrthoDB" id="351940at2"/>
<dbReference type="Proteomes" id="UP000005216">
    <property type="component" value="Plasmid lp54"/>
</dbReference>
<dbReference type="GO" id="GO:0009279">
    <property type="term" value="C:cell outer membrane"/>
    <property type="evidence" value="ECO:0007669"/>
    <property type="project" value="UniProtKB-SubCell"/>
</dbReference>
<dbReference type="GO" id="GO:0009986">
    <property type="term" value="C:cell surface"/>
    <property type="evidence" value="ECO:0007669"/>
    <property type="project" value="UniProtKB-SubCell"/>
</dbReference>
<dbReference type="FunFam" id="2.40.128.160:FF:000001">
    <property type="entry name" value="Outer surface protein A"/>
    <property type="match status" value="1"/>
</dbReference>
<dbReference type="Gene3D" id="3.90.930.1">
    <property type="match status" value="1"/>
</dbReference>
<dbReference type="Gene3D" id="2.40.128.160">
    <property type="entry name" value="C1 set domains (antibody constant domain-like)"/>
    <property type="match status" value="1"/>
</dbReference>
<dbReference type="InterPro" id="IPR001809">
    <property type="entry name" value="OM_lipoprot_Borrelia"/>
</dbReference>
<dbReference type="InterPro" id="IPR023322">
    <property type="entry name" value="OM_lipoprot_dom_sf"/>
</dbReference>
<dbReference type="Pfam" id="PF00820">
    <property type="entry name" value="Lipoprotein_1"/>
    <property type="match status" value="1"/>
</dbReference>
<dbReference type="PRINTS" id="PR00968">
    <property type="entry name" value="OUTRSURFACE"/>
</dbReference>
<dbReference type="SUPFAM" id="SSF51087">
    <property type="entry name" value="Outer surface protein"/>
    <property type="match status" value="1"/>
</dbReference>
<dbReference type="PROSITE" id="PS51257">
    <property type="entry name" value="PROKAR_LIPOPROTEIN"/>
    <property type="match status" value="1"/>
</dbReference>
<protein>
    <recommendedName>
        <fullName evidence="2">Outer surface protein A</fullName>
    </recommendedName>
</protein>
<comment type="subcellular location">
    <subcellularLocation>
        <location evidence="4">Cell outer membrane</location>
        <topology evidence="1">Lipid-anchor</topology>
    </subcellularLocation>
    <subcellularLocation>
        <location evidence="4">Cell surface</location>
    </subcellularLocation>
</comment>
<comment type="similarity">
    <text evidence="3">Belongs to the OspA lipoprotein family.</text>
</comment>